<organism evidence="6 7">
    <name type="scientific">Tetrahymena thermophila (strain SB210)</name>
    <dbReference type="NCBI Taxonomy" id="312017"/>
    <lineage>
        <taxon>Eukaryota</taxon>
        <taxon>Sar</taxon>
        <taxon>Alveolata</taxon>
        <taxon>Ciliophora</taxon>
        <taxon>Intramacronucleata</taxon>
        <taxon>Oligohymenophorea</taxon>
        <taxon>Hymenostomatida</taxon>
        <taxon>Tetrahymenina</taxon>
        <taxon>Tetrahymenidae</taxon>
        <taxon>Tetrahymena</taxon>
    </lineage>
</organism>
<reference evidence="7" key="1">
    <citation type="journal article" date="2006" name="PLoS Biol.">
        <title>Macronuclear genome sequence of the ciliate Tetrahymena thermophila, a model eukaryote.</title>
        <authorList>
            <person name="Eisen J.A."/>
            <person name="Coyne R.S."/>
            <person name="Wu M."/>
            <person name="Wu D."/>
            <person name="Thiagarajan M."/>
            <person name="Wortman J.R."/>
            <person name="Badger J.H."/>
            <person name="Ren Q."/>
            <person name="Amedeo P."/>
            <person name="Jones K.M."/>
            <person name="Tallon L.J."/>
            <person name="Delcher A.L."/>
            <person name="Salzberg S.L."/>
            <person name="Silva J.C."/>
            <person name="Haas B.J."/>
            <person name="Majoros W.H."/>
            <person name="Farzad M."/>
            <person name="Carlton J.M."/>
            <person name="Smith R.K. Jr."/>
            <person name="Garg J."/>
            <person name="Pearlman R.E."/>
            <person name="Karrer K.M."/>
            <person name="Sun L."/>
            <person name="Manning G."/>
            <person name="Elde N.C."/>
            <person name="Turkewitz A.P."/>
            <person name="Asai D.J."/>
            <person name="Wilkes D.E."/>
            <person name="Wang Y."/>
            <person name="Cai H."/>
            <person name="Collins K."/>
            <person name="Stewart B.A."/>
            <person name="Lee S.R."/>
            <person name="Wilamowska K."/>
            <person name="Weinberg Z."/>
            <person name="Ruzzo W.L."/>
            <person name="Wloga D."/>
            <person name="Gaertig J."/>
            <person name="Frankel J."/>
            <person name="Tsao C.-C."/>
            <person name="Gorovsky M.A."/>
            <person name="Keeling P.J."/>
            <person name="Waller R.F."/>
            <person name="Patron N.J."/>
            <person name="Cherry J.M."/>
            <person name="Stover N.A."/>
            <person name="Krieger C.J."/>
            <person name="del Toro C."/>
            <person name="Ryder H.F."/>
            <person name="Williamson S.C."/>
            <person name="Barbeau R.A."/>
            <person name="Hamilton E.P."/>
            <person name="Orias E."/>
        </authorList>
    </citation>
    <scope>NUCLEOTIDE SEQUENCE [LARGE SCALE GENOMIC DNA]</scope>
    <source>
        <strain evidence="7">SB210</strain>
    </source>
</reference>
<reference key="2">
    <citation type="journal article" date="2023" name="Nat. Commun.">
        <title>Integrated modeling of the Nexin-dynein regulatory complex reveals its regulatory mechanism.</title>
        <authorList>
            <person name="Ghanaeian A."/>
            <person name="Majhi S."/>
            <person name="McCafferty C.L."/>
            <person name="Nami B."/>
            <person name="Black C.S."/>
            <person name="Yang S.K."/>
            <person name="Legal T."/>
            <person name="Papoulas O."/>
            <person name="Janowska M."/>
            <person name="Valente-Paterno M."/>
            <person name="Marcotte E.M."/>
            <person name="Wloga D."/>
            <person name="Bui K.H."/>
        </authorList>
    </citation>
    <scope>FUNCTION</scope>
    <scope>SUBUNIT</scope>
    <scope>SUBCELLULAR LOCATION</scope>
</reference>
<proteinExistence type="evidence at protein level"/>
<name>CF57A_TETTS</name>
<evidence type="ECO:0000255" key="1"/>
<evidence type="ECO:0000256" key="2">
    <source>
        <dbReference type="SAM" id="MobiDB-lite"/>
    </source>
</evidence>
<evidence type="ECO:0000269" key="3">
    <source>
    </source>
</evidence>
<evidence type="ECO:0000305" key="4"/>
<evidence type="ECO:0000305" key="5">
    <source>
    </source>
</evidence>
<evidence type="ECO:0000312" key="6">
    <source>
        <dbReference type="EMBL" id="EAR92035.2"/>
    </source>
</evidence>
<evidence type="ECO:0000312" key="7">
    <source>
        <dbReference type="Proteomes" id="UP000009168"/>
    </source>
</evidence>
<sequence>MAQQIVQSLQDEGTQSLKLDFSMKYVLGYRSDFKNNIFQYTMNDQNRIIYPAGNTIVISNNENKQQFINCIPGTKGITCMTLSPSKRLLAWSEDCDSGIIVVFDLIKLDKLEKAKNQNYQEPSDKDKLDKQAEKDRRDRFEKEKREKIDKLQKEVKRIITTLDCKSRHYVALDFNKINEKRIVALSCAPDWQLIYFQLDKQKTVIINQVPLKVGDNMRYTHCFFHPKEEDFIVAIGTGAIKPYKLGADGQFKQKDPPFVKKESKDQAHSPNYLSYCILQDGYMVIGTDMGEILLFQPSCEFKTILASSPKNEQFAIQCIQPYSKGFLVGGKECTILFYEKDVDLKNPYKLCSKKIQFRDMKAMITSLLLTPNEEKLIVGVDSGQLLQVPFTSDSMQLNEENSKCEPLFMPFHSDKITGLDVCIRKSLVATCSVDKTVRIWNYSDNQLENSKEFEEEAYAVAFHPSGFHIIVAFTEKIRLMNIFENDLISFKELSVKNCREIQFSNGGHFFAITNVSMVQVFQFYTGENPSNLVFRGSGKVRTIFWEEDDQGFYTGSTDGLVIYWRVDDNGPQKTQIAQFNNLIITSITGLYNPDTTTQGLERILFVSGVSSSQENEGEKCVYKLVISCRQDKEGREITDNTLKKIYYVSQPEQKIFTGTNVSQIAISHSKKLFFFATEDRPGAIRITKYPFTNEIMEIQSHFGPITRMRISFKDNYIFTAGEDGALIIYENKEKEYQVKIENESVEAAAEEFLIPRDQYNDQKREIEKLKRQLNEERMKQEQQIKEKMKDRDDKINQLENQQKDSDNRDLNKYQLLEREKNEMIESYEEKKRMMKLQHENNKRTIENEYKKKIALEMSRNEELAREKEKEEKRFQSEIQQYQEEHLRQMEEKRRHYEEQLAIEKQLYNDLHLKREELAYKFDQKRNKLEMEAEELIDQLKEENESKMQVLFKNLEKAEIKKMDRRNDYDTEAQKLEEQKSKLKGTMEDITSIQETNKMLQKEKESHAKEIDEREKTIRDKGRRIYELKKKTQELEKFKFVLDYKIKELKRDIGPKEEEIAKMKEQIANMNSEILHFKRTNANLKLIVTDLRLRQEGMKKEIEDQSKVIQQNNQYIKAFEQDMSDCHQHIADYKKLKQKVLNLYNQYVQGDDSKKKRLENNDQQKEIMKERAHLETSVNNLKIKHDKNQSVHKSDTTIIMKHNTFLIFEINHLKREKKKILEDKAKMLMQATQKKKQDGTSRVDIDSLEKEIQKNEDEKRKLKEDIEKLRQYNDQIKNQLRQQIQNQQDDDEDN</sequence>
<dbReference type="EMBL" id="GG662767">
    <property type="protein sequence ID" value="EAR92035.2"/>
    <property type="molecule type" value="Genomic_DNA"/>
</dbReference>
<dbReference type="RefSeq" id="XP_001012280.2">
    <property type="nucleotide sequence ID" value="XM_001012280.2"/>
</dbReference>
<dbReference type="PDB" id="8TID">
    <property type="method" value="EM"/>
    <property type="resolution" value="3.60 A"/>
    <property type="chains" value="w=1-1293"/>
</dbReference>
<dbReference type="PDBsum" id="8TID"/>
<dbReference type="EMDB" id="EMD-41284"/>
<dbReference type="SMR" id="Q234G8"/>
<dbReference type="STRING" id="312017.Q234G8"/>
<dbReference type="EnsemblProtists" id="EAR92035">
    <property type="protein sequence ID" value="EAR92035"/>
    <property type="gene ID" value="TTHERM_00105300"/>
</dbReference>
<dbReference type="GeneID" id="7828145"/>
<dbReference type="KEGG" id="tet:TTHERM_00105300"/>
<dbReference type="eggNOG" id="ENOG502QTIS">
    <property type="taxonomic scope" value="Eukaryota"/>
</dbReference>
<dbReference type="HOGENOM" id="CLU_003598_0_0_1"/>
<dbReference type="InParanoid" id="Q234G8"/>
<dbReference type="OrthoDB" id="47276at2759"/>
<dbReference type="Proteomes" id="UP000009168">
    <property type="component" value="Unassembled WGS sequence"/>
</dbReference>
<dbReference type="GO" id="GO:0005929">
    <property type="term" value="C:cilium"/>
    <property type="evidence" value="ECO:0007669"/>
    <property type="project" value="UniProtKB-SubCell"/>
</dbReference>
<dbReference type="Gene3D" id="2.130.10.10">
    <property type="entry name" value="YVTN repeat-like/Quinoprotein amine dehydrogenase"/>
    <property type="match status" value="4"/>
</dbReference>
<dbReference type="InterPro" id="IPR052993">
    <property type="entry name" value="CFA-57"/>
</dbReference>
<dbReference type="InterPro" id="IPR015943">
    <property type="entry name" value="WD40/YVTN_repeat-like_dom_sf"/>
</dbReference>
<dbReference type="InterPro" id="IPR036322">
    <property type="entry name" value="WD40_repeat_dom_sf"/>
</dbReference>
<dbReference type="InterPro" id="IPR001680">
    <property type="entry name" value="WD40_rpt"/>
</dbReference>
<dbReference type="PANTHER" id="PTHR32215">
    <property type="entry name" value="CILIA- AND FLAGELLA-ASSOCIATED PROTEIN 57"/>
    <property type="match status" value="1"/>
</dbReference>
<dbReference type="PANTHER" id="PTHR32215:SF0">
    <property type="entry name" value="CILIA- AND FLAGELLA-ASSOCIATED PROTEIN 57"/>
    <property type="match status" value="1"/>
</dbReference>
<dbReference type="Pfam" id="PF00400">
    <property type="entry name" value="WD40"/>
    <property type="match status" value="1"/>
</dbReference>
<dbReference type="SMART" id="SM00320">
    <property type="entry name" value="WD40"/>
    <property type="match status" value="5"/>
</dbReference>
<dbReference type="SUPFAM" id="SSF50978">
    <property type="entry name" value="WD40 repeat-like"/>
    <property type="match status" value="2"/>
</dbReference>
<dbReference type="PROSITE" id="PS50082">
    <property type="entry name" value="WD_REPEATS_2"/>
    <property type="match status" value="1"/>
</dbReference>
<accession>Q234G8</accession>
<comment type="function">
    <text evidence="3">Associates with components of the nexin-dynein regulatory complex (N-DRC), a key regulator of ciliary/flagellar motility, and might act as an inner dynein arm (IDA) hub or linkage.</text>
</comment>
<comment type="subunit">
    <text evidence="3">Forms a heterodimer with CFAP57C. Associates with components of the nexin-dynein regulatory complex (N-DRC) and the CFAP184:CFAP263 complex.</text>
</comment>
<comment type="subcellular location">
    <subcellularLocation>
        <location evidence="5">Cell projection</location>
        <location evidence="5">Cilium</location>
    </subcellularLocation>
</comment>
<comment type="similarity">
    <text>Belongs to the CFAP57 family.</text>
</comment>
<feature type="chain" id="PRO_0000460219" description="Cilia- and flagella-associated protein 57 A">
    <location>
        <begin position="1"/>
        <end position="1293"/>
    </location>
</feature>
<feature type="repeat" description="WD 1" evidence="1">
    <location>
        <begin position="72"/>
        <end position="113"/>
    </location>
</feature>
<feature type="repeat" description="WD 2" evidence="1">
    <location>
        <begin position="309"/>
        <end position="348"/>
    </location>
</feature>
<feature type="repeat" description="WD 3" evidence="1">
    <location>
        <begin position="359"/>
        <end position="398"/>
    </location>
</feature>
<feature type="repeat" description="WD 4" evidence="1">
    <location>
        <begin position="411"/>
        <end position="450"/>
    </location>
</feature>
<feature type="repeat" description="WD 5" evidence="1">
    <location>
        <begin position="535"/>
        <end position="574"/>
    </location>
</feature>
<feature type="repeat" description="WD 6" evidence="1">
    <location>
        <begin position="700"/>
        <end position="739"/>
    </location>
</feature>
<feature type="region of interest" description="Disordered" evidence="2">
    <location>
        <begin position="117"/>
        <end position="143"/>
    </location>
</feature>
<feature type="coiled-coil region" evidence="1">
    <location>
        <begin position="756"/>
        <end position="1016"/>
    </location>
</feature>
<feature type="coiled-coil region" evidence="1">
    <location>
        <begin position="1045"/>
        <end position="1079"/>
    </location>
</feature>
<feature type="coiled-coil region" evidence="1">
    <location>
        <begin position="1209"/>
        <end position="1285"/>
    </location>
</feature>
<feature type="compositionally biased region" description="Basic and acidic residues" evidence="2">
    <location>
        <begin position="122"/>
        <end position="143"/>
    </location>
</feature>
<gene>
    <name type="primary">CFAP57A</name>
    <name type="synonym">WDR65C</name>
    <name evidence="6" type="ORF">TTHERM_00105300</name>
</gene>
<keyword id="KW-0002">3D-structure</keyword>
<keyword id="KW-0966">Cell projection</keyword>
<keyword id="KW-0175">Coiled coil</keyword>
<keyword id="KW-1185">Reference proteome</keyword>
<keyword id="KW-0677">Repeat</keyword>
<keyword id="KW-0853">WD repeat</keyword>
<protein>
    <recommendedName>
        <fullName evidence="4">Cilia- and flagella-associated protein 57 A</fullName>
    </recommendedName>
    <alternativeName>
        <fullName>WD repeat-containing protein 65 A</fullName>
    </alternativeName>
</protein>